<keyword id="KW-0903">Direct protein sequencing</keyword>
<keyword id="KW-0238">DNA-binding</keyword>
<keyword id="KW-1185">Reference proteome</keyword>
<keyword id="KW-0678">Repressor</keyword>
<keyword id="KW-0804">Transcription</keyword>
<keyword id="KW-0805">Transcription regulation</keyword>
<organism>
    <name type="scientific">Streptococcus pneumoniae (strain ATCC BAA-255 / R6)</name>
    <dbReference type="NCBI Taxonomy" id="171101"/>
    <lineage>
        <taxon>Bacteria</taxon>
        <taxon>Bacillati</taxon>
        <taxon>Bacillota</taxon>
        <taxon>Bacilli</taxon>
        <taxon>Lactobacillales</taxon>
        <taxon>Streptococcaceae</taxon>
        <taxon>Streptococcus</taxon>
    </lineage>
</organism>
<protein>
    <recommendedName>
        <fullName>HTH-type transcriptional regulator MalR</fullName>
    </recommendedName>
    <alternativeName>
        <fullName>Maltose operon transcriptional repressor</fullName>
    </alternativeName>
</protein>
<comment type="function">
    <text>Transcriptional repressor of the maltosaccharide utilization operons malxCD and malMP.</text>
</comment>
<evidence type="ECO:0000255" key="1"/>
<evidence type="ECO:0000255" key="2">
    <source>
        <dbReference type="PROSITE-ProRule" id="PRU00111"/>
    </source>
</evidence>
<evidence type="ECO:0000269" key="3">
    <source>
    </source>
</evidence>
<reference key="1">
    <citation type="journal article" date="1993" name="J. Biol. Chem.">
        <title>Characterization of the Streptococcus pneumoniae maltosaccharide regulator MalR, a member of the LacI-GalR family of repressors displaying distinctive genetic features.</title>
        <authorList>
            <person name="Puyet A."/>
            <person name="Ibanez A.M."/>
            <person name="Espinosa M."/>
        </authorList>
    </citation>
    <scope>NUCLEOTIDE SEQUENCE [GENOMIC DNA]</scope>
    <scope>PROTEIN SEQUENCE OF 2-3; 5-6 AND 8-11</scope>
</reference>
<reference key="2">
    <citation type="submission" date="1997-12" db="EMBL/GenBank/DDBJ databases">
        <authorList>
            <person name="Puyet A."/>
        </authorList>
    </citation>
    <scope>SEQUENCE REVISION TO 43-56</scope>
</reference>
<reference key="3">
    <citation type="journal article" date="2001" name="J. Bacteriol.">
        <title>Genome of the bacterium Streptococcus pneumoniae strain R6.</title>
        <authorList>
            <person name="Hoskins J."/>
            <person name="Alborn W.E. Jr."/>
            <person name="Arnold J."/>
            <person name="Blaszczak L.C."/>
            <person name="Burgett S."/>
            <person name="DeHoff B.S."/>
            <person name="Estrem S.T."/>
            <person name="Fritz L."/>
            <person name="Fu D.-J."/>
            <person name="Fuller W."/>
            <person name="Geringer C."/>
            <person name="Gilmour R."/>
            <person name="Glass J.S."/>
            <person name="Khoja H."/>
            <person name="Kraft A.R."/>
            <person name="Lagace R.E."/>
            <person name="LeBlanc D.J."/>
            <person name="Lee L.N."/>
            <person name="Lefkowitz E.J."/>
            <person name="Lu J."/>
            <person name="Matsushima P."/>
            <person name="McAhren S.M."/>
            <person name="McHenney M."/>
            <person name="McLeaster K."/>
            <person name="Mundy C.W."/>
            <person name="Nicas T.I."/>
            <person name="Norris F.H."/>
            <person name="O'Gara M."/>
            <person name="Peery R.B."/>
            <person name="Robertson G.T."/>
            <person name="Rockey P."/>
            <person name="Sun P.-M."/>
            <person name="Winkler M.E."/>
            <person name="Yang Y."/>
            <person name="Young-Bellido M."/>
            <person name="Zhao G."/>
            <person name="Zook C.A."/>
            <person name="Baltz R.H."/>
            <person name="Jaskunas S.R."/>
            <person name="Rosteck P.R. Jr."/>
            <person name="Skatrud P.L."/>
            <person name="Glass J.I."/>
        </authorList>
    </citation>
    <scope>NUCLEOTIDE SEQUENCE [LARGE SCALE GENOMIC DNA]</scope>
    <source>
        <strain>ATCC BAA-255 / R6</strain>
    </source>
</reference>
<sequence length="328" mass="37044">MPVTIKDVAKAAGVSPSTVTRVIQNKSTISDETKKRVRKAMKELNYHPNLNARSLVSSYTQVIGLVLPDDSDAFYQNPFFPSVLRGISQVASENHYAIQIATGKDEKERLNAISQMVYGKRVDGLIFLYAQEEDPLVKLVAEEQFPFLILGKSLSPFIPLVDNDNVQAGFDATEYFIKKGCKRIAFIGGSKKLFVTKDRLTGYEQALKHYKLTTDNNRIYFADEFLEEKGYKFSKRLFKHDPQIDAIITTDSLLAEGVCNYIAKHQLDVPVLSFDSVNPKLNLAAYVDINSLELGRVSLETILQIINDNKNNKQICYRQLIAHKIIEK</sequence>
<dbReference type="EMBL" id="L21856">
    <property type="protein sequence ID" value="AAB88011.1"/>
    <property type="molecule type" value="Unassigned_DNA"/>
</dbReference>
<dbReference type="EMBL" id="AE007317">
    <property type="protein sequence ID" value="AAL00724.1"/>
    <property type="molecule type" value="Genomic_DNA"/>
</dbReference>
<dbReference type="PIR" id="G98111">
    <property type="entry name" value="G98111"/>
</dbReference>
<dbReference type="RefSeq" id="NP_359513.1">
    <property type="nucleotide sequence ID" value="NC_003098.1"/>
</dbReference>
<dbReference type="RefSeq" id="WP_001145439.1">
    <property type="nucleotide sequence ID" value="NC_003098.1"/>
</dbReference>
<dbReference type="SMR" id="P0A4T2"/>
<dbReference type="STRING" id="171101.spr1922"/>
<dbReference type="KEGG" id="spr:spr1922"/>
<dbReference type="PATRIC" id="fig|171101.6.peg.2071"/>
<dbReference type="eggNOG" id="COG1609">
    <property type="taxonomic scope" value="Bacteria"/>
</dbReference>
<dbReference type="HOGENOM" id="CLU_037628_6_2_9"/>
<dbReference type="Proteomes" id="UP000000586">
    <property type="component" value="Chromosome"/>
</dbReference>
<dbReference type="GO" id="GO:0003700">
    <property type="term" value="F:DNA-binding transcription factor activity"/>
    <property type="evidence" value="ECO:0000318"/>
    <property type="project" value="GO_Central"/>
</dbReference>
<dbReference type="GO" id="GO:0000976">
    <property type="term" value="F:transcription cis-regulatory region binding"/>
    <property type="evidence" value="ECO:0000318"/>
    <property type="project" value="GO_Central"/>
</dbReference>
<dbReference type="GO" id="GO:0006355">
    <property type="term" value="P:regulation of DNA-templated transcription"/>
    <property type="evidence" value="ECO:0000318"/>
    <property type="project" value="GO_Central"/>
</dbReference>
<dbReference type="CDD" id="cd01392">
    <property type="entry name" value="HTH_LacI"/>
    <property type="match status" value="1"/>
</dbReference>
<dbReference type="CDD" id="cd06294">
    <property type="entry name" value="PBP1_MalR-like"/>
    <property type="match status" value="1"/>
</dbReference>
<dbReference type="Gene3D" id="3.40.50.2300">
    <property type="match status" value="2"/>
</dbReference>
<dbReference type="Gene3D" id="1.10.260.40">
    <property type="entry name" value="lambda repressor-like DNA-binding domains"/>
    <property type="match status" value="1"/>
</dbReference>
<dbReference type="InterPro" id="IPR001387">
    <property type="entry name" value="Cro/C1-type_HTH"/>
</dbReference>
<dbReference type="InterPro" id="IPR000843">
    <property type="entry name" value="HTH_LacI"/>
</dbReference>
<dbReference type="InterPro" id="IPR010982">
    <property type="entry name" value="Lambda_DNA-bd_dom_sf"/>
</dbReference>
<dbReference type="InterPro" id="IPR001761">
    <property type="entry name" value="Peripla_BP/Lac1_sug-bd_dom"/>
</dbReference>
<dbReference type="InterPro" id="IPR028082">
    <property type="entry name" value="Peripla_BP_I"/>
</dbReference>
<dbReference type="PANTHER" id="PTHR30146:SF109">
    <property type="entry name" value="HTH-TYPE TRANSCRIPTIONAL REGULATOR GALS"/>
    <property type="match status" value="1"/>
</dbReference>
<dbReference type="PANTHER" id="PTHR30146">
    <property type="entry name" value="LACI-RELATED TRANSCRIPTIONAL REPRESSOR"/>
    <property type="match status" value="1"/>
</dbReference>
<dbReference type="Pfam" id="PF00356">
    <property type="entry name" value="LacI"/>
    <property type="match status" value="1"/>
</dbReference>
<dbReference type="Pfam" id="PF00532">
    <property type="entry name" value="Peripla_BP_1"/>
    <property type="match status" value="1"/>
</dbReference>
<dbReference type="PRINTS" id="PR00036">
    <property type="entry name" value="HTHLACI"/>
</dbReference>
<dbReference type="SMART" id="SM00354">
    <property type="entry name" value="HTH_LACI"/>
    <property type="match status" value="1"/>
</dbReference>
<dbReference type="SUPFAM" id="SSF47413">
    <property type="entry name" value="lambda repressor-like DNA-binding domains"/>
    <property type="match status" value="1"/>
</dbReference>
<dbReference type="SUPFAM" id="SSF53822">
    <property type="entry name" value="Periplasmic binding protein-like I"/>
    <property type="match status" value="1"/>
</dbReference>
<dbReference type="PROSITE" id="PS00356">
    <property type="entry name" value="HTH_LACI_1"/>
    <property type="match status" value="1"/>
</dbReference>
<dbReference type="PROSITE" id="PS50932">
    <property type="entry name" value="HTH_LACI_2"/>
    <property type="match status" value="1"/>
</dbReference>
<name>MALR_STRR6</name>
<gene>
    <name type="primary">malR</name>
    <name type="ordered locus">spr1922</name>
</gene>
<feature type="initiator methionine" description="Removed" evidence="3">
    <location>
        <position position="1"/>
    </location>
</feature>
<feature type="chain" id="PRO_0000107972" description="HTH-type transcriptional regulator MalR">
    <location>
        <begin position="2"/>
        <end position="328"/>
    </location>
</feature>
<feature type="domain" description="HTH lacI-type" evidence="2">
    <location>
        <begin position="2"/>
        <end position="57"/>
    </location>
</feature>
<feature type="DNA-binding region" description="H-T-H motif" evidence="2">
    <location>
        <begin position="5"/>
        <end position="24"/>
    </location>
</feature>
<feature type="region of interest" description="Inducer binding" evidence="1">
    <location>
        <begin position="173"/>
        <end position="218"/>
    </location>
</feature>
<feature type="region of interest" description="Dimerization" evidence="1">
    <location>
        <begin position="282"/>
        <end position="291"/>
    </location>
</feature>
<proteinExistence type="evidence at protein level"/>
<accession>P0A4T2</accession>
<accession>Q08511</accession>